<accession>A5USJ2</accession>
<name>EFG_ROSS1</name>
<proteinExistence type="inferred from homology"/>
<keyword id="KW-0963">Cytoplasm</keyword>
<keyword id="KW-0251">Elongation factor</keyword>
<keyword id="KW-0342">GTP-binding</keyword>
<keyword id="KW-0547">Nucleotide-binding</keyword>
<keyword id="KW-0648">Protein biosynthesis</keyword>
<reference key="1">
    <citation type="submission" date="2007-04" db="EMBL/GenBank/DDBJ databases">
        <title>Complete sequence of Roseiflexus sp. RS-1.</title>
        <authorList>
            <consortium name="US DOE Joint Genome Institute"/>
            <person name="Copeland A."/>
            <person name="Lucas S."/>
            <person name="Lapidus A."/>
            <person name="Barry K."/>
            <person name="Detter J.C."/>
            <person name="Glavina del Rio T."/>
            <person name="Hammon N."/>
            <person name="Israni S."/>
            <person name="Dalin E."/>
            <person name="Tice H."/>
            <person name="Pitluck S."/>
            <person name="Chertkov O."/>
            <person name="Brettin T."/>
            <person name="Bruce D."/>
            <person name="Han C."/>
            <person name="Schmutz J."/>
            <person name="Larimer F."/>
            <person name="Land M."/>
            <person name="Hauser L."/>
            <person name="Kyrpides N."/>
            <person name="Mikhailova N."/>
            <person name="Bryant D.A."/>
            <person name="Richardson P."/>
        </authorList>
    </citation>
    <scope>NUCLEOTIDE SEQUENCE [LARGE SCALE GENOMIC DNA]</scope>
    <source>
        <strain>RS-1</strain>
    </source>
</reference>
<dbReference type="EMBL" id="CP000686">
    <property type="protein sequence ID" value="ABQ89595.1"/>
    <property type="molecule type" value="Genomic_DNA"/>
</dbReference>
<dbReference type="RefSeq" id="WP_011955948.1">
    <property type="nucleotide sequence ID" value="NC_009523.1"/>
</dbReference>
<dbReference type="SMR" id="A5USJ2"/>
<dbReference type="STRING" id="357808.RoseRS_1188"/>
<dbReference type="KEGG" id="rrs:RoseRS_1188"/>
<dbReference type="eggNOG" id="COG0480">
    <property type="taxonomic scope" value="Bacteria"/>
</dbReference>
<dbReference type="HOGENOM" id="CLU_002794_4_1_0"/>
<dbReference type="OrthoDB" id="9804431at2"/>
<dbReference type="Proteomes" id="UP000006554">
    <property type="component" value="Chromosome"/>
</dbReference>
<dbReference type="GO" id="GO:0005737">
    <property type="term" value="C:cytoplasm"/>
    <property type="evidence" value="ECO:0007669"/>
    <property type="project" value="UniProtKB-SubCell"/>
</dbReference>
<dbReference type="GO" id="GO:0005525">
    <property type="term" value="F:GTP binding"/>
    <property type="evidence" value="ECO:0007669"/>
    <property type="project" value="UniProtKB-UniRule"/>
</dbReference>
<dbReference type="GO" id="GO:0003924">
    <property type="term" value="F:GTPase activity"/>
    <property type="evidence" value="ECO:0007669"/>
    <property type="project" value="InterPro"/>
</dbReference>
<dbReference type="GO" id="GO:0003746">
    <property type="term" value="F:translation elongation factor activity"/>
    <property type="evidence" value="ECO:0007669"/>
    <property type="project" value="UniProtKB-UniRule"/>
</dbReference>
<dbReference type="GO" id="GO:0032790">
    <property type="term" value="P:ribosome disassembly"/>
    <property type="evidence" value="ECO:0007669"/>
    <property type="project" value="TreeGrafter"/>
</dbReference>
<dbReference type="CDD" id="cd01886">
    <property type="entry name" value="EF-G"/>
    <property type="match status" value="1"/>
</dbReference>
<dbReference type="CDD" id="cd16262">
    <property type="entry name" value="EFG_III"/>
    <property type="match status" value="1"/>
</dbReference>
<dbReference type="CDD" id="cd01434">
    <property type="entry name" value="EFG_mtEFG1_IV"/>
    <property type="match status" value="1"/>
</dbReference>
<dbReference type="CDD" id="cd03713">
    <property type="entry name" value="EFG_mtEFG_C"/>
    <property type="match status" value="1"/>
</dbReference>
<dbReference type="CDD" id="cd04088">
    <property type="entry name" value="EFG_mtEFG_II"/>
    <property type="match status" value="1"/>
</dbReference>
<dbReference type="FunFam" id="2.40.30.10:FF:000006">
    <property type="entry name" value="Elongation factor G"/>
    <property type="match status" value="1"/>
</dbReference>
<dbReference type="FunFam" id="3.30.230.10:FF:000003">
    <property type="entry name" value="Elongation factor G"/>
    <property type="match status" value="1"/>
</dbReference>
<dbReference type="FunFam" id="3.30.70.240:FF:000001">
    <property type="entry name" value="Elongation factor G"/>
    <property type="match status" value="1"/>
</dbReference>
<dbReference type="FunFam" id="3.30.70.870:FF:000001">
    <property type="entry name" value="Elongation factor G"/>
    <property type="match status" value="1"/>
</dbReference>
<dbReference type="FunFam" id="3.40.50.300:FF:000029">
    <property type="entry name" value="Elongation factor G"/>
    <property type="match status" value="1"/>
</dbReference>
<dbReference type="Gene3D" id="3.30.230.10">
    <property type="match status" value="1"/>
</dbReference>
<dbReference type="Gene3D" id="3.30.70.240">
    <property type="match status" value="1"/>
</dbReference>
<dbReference type="Gene3D" id="3.30.70.870">
    <property type="entry name" value="Elongation Factor G (Translational Gtpase), domain 3"/>
    <property type="match status" value="1"/>
</dbReference>
<dbReference type="Gene3D" id="3.40.50.300">
    <property type="entry name" value="P-loop containing nucleotide triphosphate hydrolases"/>
    <property type="match status" value="1"/>
</dbReference>
<dbReference type="Gene3D" id="2.40.30.10">
    <property type="entry name" value="Translation factors"/>
    <property type="match status" value="1"/>
</dbReference>
<dbReference type="HAMAP" id="MF_00054_B">
    <property type="entry name" value="EF_G_EF_2_B"/>
    <property type="match status" value="1"/>
</dbReference>
<dbReference type="InterPro" id="IPR053905">
    <property type="entry name" value="EF-G-like_DII"/>
</dbReference>
<dbReference type="InterPro" id="IPR041095">
    <property type="entry name" value="EFG_II"/>
</dbReference>
<dbReference type="InterPro" id="IPR009022">
    <property type="entry name" value="EFG_III"/>
</dbReference>
<dbReference type="InterPro" id="IPR035647">
    <property type="entry name" value="EFG_III/V"/>
</dbReference>
<dbReference type="InterPro" id="IPR047872">
    <property type="entry name" value="EFG_IV"/>
</dbReference>
<dbReference type="InterPro" id="IPR035649">
    <property type="entry name" value="EFG_V"/>
</dbReference>
<dbReference type="InterPro" id="IPR000640">
    <property type="entry name" value="EFG_V-like"/>
</dbReference>
<dbReference type="InterPro" id="IPR031157">
    <property type="entry name" value="G_TR_CS"/>
</dbReference>
<dbReference type="InterPro" id="IPR027417">
    <property type="entry name" value="P-loop_NTPase"/>
</dbReference>
<dbReference type="InterPro" id="IPR020568">
    <property type="entry name" value="Ribosomal_Su5_D2-typ_SF"/>
</dbReference>
<dbReference type="InterPro" id="IPR014721">
    <property type="entry name" value="Ribsml_uS5_D2-typ_fold_subgr"/>
</dbReference>
<dbReference type="InterPro" id="IPR005225">
    <property type="entry name" value="Small_GTP-bd"/>
</dbReference>
<dbReference type="InterPro" id="IPR000795">
    <property type="entry name" value="T_Tr_GTP-bd_dom"/>
</dbReference>
<dbReference type="InterPro" id="IPR009000">
    <property type="entry name" value="Transl_B-barrel_sf"/>
</dbReference>
<dbReference type="InterPro" id="IPR004540">
    <property type="entry name" value="Transl_elong_EFG/EF2"/>
</dbReference>
<dbReference type="InterPro" id="IPR005517">
    <property type="entry name" value="Transl_elong_EFG/EF2_IV"/>
</dbReference>
<dbReference type="NCBIfam" id="TIGR00484">
    <property type="entry name" value="EF-G"/>
    <property type="match status" value="1"/>
</dbReference>
<dbReference type="NCBIfam" id="NF009379">
    <property type="entry name" value="PRK12740.1-3"/>
    <property type="match status" value="1"/>
</dbReference>
<dbReference type="NCBIfam" id="NF009381">
    <property type="entry name" value="PRK12740.1-5"/>
    <property type="match status" value="1"/>
</dbReference>
<dbReference type="NCBIfam" id="NF009891">
    <property type="entry name" value="PRK13351.1-1"/>
    <property type="match status" value="1"/>
</dbReference>
<dbReference type="NCBIfam" id="TIGR00231">
    <property type="entry name" value="small_GTP"/>
    <property type="match status" value="1"/>
</dbReference>
<dbReference type="PANTHER" id="PTHR43261:SF1">
    <property type="entry name" value="RIBOSOME-RELEASING FACTOR 2, MITOCHONDRIAL"/>
    <property type="match status" value="1"/>
</dbReference>
<dbReference type="PANTHER" id="PTHR43261">
    <property type="entry name" value="TRANSLATION ELONGATION FACTOR G-RELATED"/>
    <property type="match status" value="1"/>
</dbReference>
<dbReference type="Pfam" id="PF22042">
    <property type="entry name" value="EF-G_D2"/>
    <property type="match status" value="1"/>
</dbReference>
<dbReference type="Pfam" id="PF00679">
    <property type="entry name" value="EFG_C"/>
    <property type="match status" value="1"/>
</dbReference>
<dbReference type="Pfam" id="PF14492">
    <property type="entry name" value="EFG_III"/>
    <property type="match status" value="1"/>
</dbReference>
<dbReference type="Pfam" id="PF03764">
    <property type="entry name" value="EFG_IV"/>
    <property type="match status" value="1"/>
</dbReference>
<dbReference type="Pfam" id="PF00009">
    <property type="entry name" value="GTP_EFTU"/>
    <property type="match status" value="1"/>
</dbReference>
<dbReference type="PRINTS" id="PR00315">
    <property type="entry name" value="ELONGATNFCT"/>
</dbReference>
<dbReference type="SMART" id="SM00838">
    <property type="entry name" value="EFG_C"/>
    <property type="match status" value="1"/>
</dbReference>
<dbReference type="SMART" id="SM00889">
    <property type="entry name" value="EFG_IV"/>
    <property type="match status" value="1"/>
</dbReference>
<dbReference type="SUPFAM" id="SSF54980">
    <property type="entry name" value="EF-G C-terminal domain-like"/>
    <property type="match status" value="2"/>
</dbReference>
<dbReference type="SUPFAM" id="SSF52540">
    <property type="entry name" value="P-loop containing nucleoside triphosphate hydrolases"/>
    <property type="match status" value="1"/>
</dbReference>
<dbReference type="SUPFAM" id="SSF54211">
    <property type="entry name" value="Ribosomal protein S5 domain 2-like"/>
    <property type="match status" value="1"/>
</dbReference>
<dbReference type="SUPFAM" id="SSF50447">
    <property type="entry name" value="Translation proteins"/>
    <property type="match status" value="1"/>
</dbReference>
<dbReference type="PROSITE" id="PS00301">
    <property type="entry name" value="G_TR_1"/>
    <property type="match status" value="1"/>
</dbReference>
<dbReference type="PROSITE" id="PS51722">
    <property type="entry name" value="G_TR_2"/>
    <property type="match status" value="1"/>
</dbReference>
<gene>
    <name evidence="1" type="primary">fusA</name>
    <name type="ordered locus">RoseRS_1188</name>
</gene>
<sequence>MPREVPLERIRNIGIIAHIDAGKTTTTERILFYTGRTYKLGEVHEGTAVMDWMEQERERGITITAAATTAEWTVEGVPYRINIIDTPGHVDFTAEVERSLRVLDGGVVVFDAVAGVEPQSETVWRQADKYHVPRICFVNKMDRIGANFERTVEMIRERLGAKPVPIQFPIGSEDRFRGIVDLITNKAVLYVDDQGKREELDAIPTEIADEVERLRNEMIEAIAETDDELMLLYLEGEELSVEELRRALRKATIKGQLVPVLCGAALRNKGVQRLLDAIVHYLPSPVDIPPVRGTRPGQVAGDDGVEMITRPTSEDAPFTGLVFKIVSDPFVGKLAYFRVYSGKLETGSYVLNSTRNQRERIGRLLQMHANHREEIKEVYAGDIAAMVGPKQSYTGDTICDPNDPIVLESIRFPEPVIQLAIEPKTKADQDKMAVALSKLAEEDPTFRVFTDQETGQTIIAGMGELHLEVIVDRMRREYKVEANQGKPQVAYRESITVPADVDSKFVRQTGGKGQYGHVKLQVEPLERGKGFEFINAIVGGVIPREYIPAVEAGVKEAMASGVIAGYPVVDLKVTLYDGSYHEVDSSEMAFKIAASMGLKEAVRKGRPILLEPVMKVEIVTPEDFLGTVLGDINSRRGHVEGMEARGNAQVIRAYVPLASMFGYTTDLRSATQGRATSSMEFAYYQPLPEALAKEIVEKRRG</sequence>
<evidence type="ECO:0000255" key="1">
    <source>
        <dbReference type="HAMAP-Rule" id="MF_00054"/>
    </source>
</evidence>
<comment type="function">
    <text evidence="1">Catalyzes the GTP-dependent ribosomal translocation step during translation elongation. During this step, the ribosome changes from the pre-translocational (PRE) to the post-translocational (POST) state as the newly formed A-site-bound peptidyl-tRNA and P-site-bound deacylated tRNA move to the P and E sites, respectively. Catalyzes the coordinated movement of the two tRNA molecules, the mRNA and conformational changes in the ribosome.</text>
</comment>
<comment type="subcellular location">
    <subcellularLocation>
        <location evidence="1">Cytoplasm</location>
    </subcellularLocation>
</comment>
<comment type="similarity">
    <text evidence="1">Belongs to the TRAFAC class translation factor GTPase superfamily. Classic translation factor GTPase family. EF-G/EF-2 subfamily.</text>
</comment>
<feature type="chain" id="PRO_1000008878" description="Elongation factor G">
    <location>
        <begin position="1"/>
        <end position="701"/>
    </location>
</feature>
<feature type="domain" description="tr-type G">
    <location>
        <begin position="8"/>
        <end position="286"/>
    </location>
</feature>
<feature type="binding site" evidence="1">
    <location>
        <begin position="17"/>
        <end position="24"/>
    </location>
    <ligand>
        <name>GTP</name>
        <dbReference type="ChEBI" id="CHEBI:37565"/>
    </ligand>
</feature>
<feature type="binding site" evidence="1">
    <location>
        <begin position="85"/>
        <end position="89"/>
    </location>
    <ligand>
        <name>GTP</name>
        <dbReference type="ChEBI" id="CHEBI:37565"/>
    </ligand>
</feature>
<feature type="binding site" evidence="1">
    <location>
        <begin position="139"/>
        <end position="142"/>
    </location>
    <ligand>
        <name>GTP</name>
        <dbReference type="ChEBI" id="CHEBI:37565"/>
    </ligand>
</feature>
<organism>
    <name type="scientific">Roseiflexus sp. (strain RS-1)</name>
    <dbReference type="NCBI Taxonomy" id="357808"/>
    <lineage>
        <taxon>Bacteria</taxon>
        <taxon>Bacillati</taxon>
        <taxon>Chloroflexota</taxon>
        <taxon>Chloroflexia</taxon>
        <taxon>Chloroflexales</taxon>
        <taxon>Roseiflexineae</taxon>
        <taxon>Roseiflexaceae</taxon>
        <taxon>Roseiflexus</taxon>
    </lineage>
</organism>
<protein>
    <recommendedName>
        <fullName evidence="1">Elongation factor G</fullName>
        <shortName evidence="1">EF-G</shortName>
    </recommendedName>
</protein>